<accession>P39966</accession>
<accession>D3DLZ6</accession>
<feature type="chain" id="PRO_0000057775" description="Protein phosphatase 2C homolog 2">
    <location>
        <begin position="1"/>
        <end position="464"/>
    </location>
</feature>
<feature type="domain" description="PPM-type phosphatase" evidence="2">
    <location>
        <begin position="23"/>
        <end position="292"/>
    </location>
</feature>
<feature type="region of interest" description="Interaction with IRE1" evidence="9">
    <location>
        <begin position="174"/>
        <end position="355"/>
    </location>
</feature>
<feature type="region of interest" description="Disordered" evidence="3">
    <location>
        <begin position="361"/>
        <end position="398"/>
    </location>
</feature>
<feature type="region of interest" description="Disordered" evidence="3">
    <location>
        <begin position="434"/>
        <end position="464"/>
    </location>
</feature>
<feature type="compositionally biased region" description="Acidic residues" evidence="3">
    <location>
        <begin position="366"/>
        <end position="384"/>
    </location>
</feature>
<feature type="compositionally biased region" description="Polar residues" evidence="3">
    <location>
        <begin position="386"/>
        <end position="396"/>
    </location>
</feature>
<feature type="compositionally biased region" description="Basic and acidic residues" evidence="3">
    <location>
        <begin position="448"/>
        <end position="458"/>
    </location>
</feature>
<feature type="binding site" evidence="1">
    <location>
        <position position="62"/>
    </location>
    <ligand>
        <name>Mn(2+)</name>
        <dbReference type="ChEBI" id="CHEBI:29035"/>
        <label>1</label>
    </ligand>
</feature>
<feature type="binding site" evidence="1">
    <location>
        <position position="62"/>
    </location>
    <ligand>
        <name>Mn(2+)</name>
        <dbReference type="ChEBI" id="CHEBI:29035"/>
        <label>2</label>
    </ligand>
</feature>
<feature type="binding site" evidence="1">
    <location>
        <position position="63"/>
    </location>
    <ligand>
        <name>Mn(2+)</name>
        <dbReference type="ChEBI" id="CHEBI:29035"/>
        <label>1</label>
    </ligand>
</feature>
<feature type="binding site" evidence="11">
    <location>
        <position position="234"/>
    </location>
    <ligand>
        <name>Mn(2+)</name>
        <dbReference type="ChEBI" id="CHEBI:29035"/>
        <label>2</label>
    </ligand>
</feature>
<feature type="binding site" evidence="1">
    <location>
        <position position="283"/>
    </location>
    <ligand>
        <name>Mn(2+)</name>
        <dbReference type="ChEBI" id="CHEBI:29035"/>
        <label>2</label>
    </ligand>
</feature>
<feature type="modified residue" description="Phosphothreonine" evidence="12">
    <location>
        <position position="376"/>
    </location>
</feature>
<feature type="modified residue" description="Phosphothreonine" evidence="12">
    <location>
        <position position="380"/>
    </location>
</feature>
<feature type="mutagenesis site" description="Disrupts catalytic activity." evidence="6 9">
    <original>ED</original>
    <variation>AA</variation>
    <location>
        <begin position="37"/>
        <end position="38"/>
    </location>
</feature>
<feature type="mutagenesis site" description="Disrupts catalytic activity." evidence="6 9">
    <original>D</original>
    <variation>A</variation>
    <location>
        <position position="234"/>
    </location>
</feature>
<name>PP2C2_YEAST</name>
<gene>
    <name type="primary">PTC2</name>
    <name type="ordered locus">YER089C</name>
</gene>
<organism>
    <name type="scientific">Saccharomyces cerevisiae (strain ATCC 204508 / S288c)</name>
    <name type="common">Baker's yeast</name>
    <dbReference type="NCBI Taxonomy" id="559292"/>
    <lineage>
        <taxon>Eukaryota</taxon>
        <taxon>Fungi</taxon>
        <taxon>Dikarya</taxon>
        <taxon>Ascomycota</taxon>
        <taxon>Saccharomycotina</taxon>
        <taxon>Saccharomycetes</taxon>
        <taxon>Saccharomycetales</taxon>
        <taxon>Saccharomycetaceae</taxon>
        <taxon>Saccharomyces</taxon>
    </lineage>
</organism>
<sequence length="464" mass="50388">MGQILSNPVIDKESHSGADSLTAFGLCAMQGWRMSMEDSHILEPNVLTKSDKDHIAFYGIFDGHGGAKVAEYCGNKIVEILQEQKSFHEGNLPRALIDTFINTDVKLLQDPVMKEDHSGCTATSILVSKSQNLLVCGNAGDSRTVLATDGNAKALSYDHKPTLASEKSRIVAADGFVEMDRVNGNLALSRAIGDFEFKSNPKLGPEEQIVTCVPDILEHSLDYDRDEFVILACDGIWDCLTSQDCVDLVHLGLREGKTLNEISSRIIDVCCAPTTEGTGIGCDNMSIVVVALLKEGEDVAQWSDRMKSKAHRTSVRSFADKRRRVFSYYDFSKCNDEQVFAITTKKPQDKFTRDHEAAVASVTAADNDDPMDIDDTDADTDAENLDPSSQSKSKTSGPIDLASLEALLGATGGVKTDSNGNKVTYTLPQSALAQLLQTMGHDPASSHPENDSNTDHKAGRSHLQ</sequence>
<reference key="1">
    <citation type="submission" date="1996-09" db="EMBL/GenBank/DDBJ databases">
        <authorList>
            <person name="Maeda T."/>
            <person name="Tsai A.Y.M."/>
            <person name="Saito H."/>
        </authorList>
    </citation>
    <scope>NUCLEOTIDE SEQUENCE [GENOMIC DNA]</scope>
</reference>
<reference key="2">
    <citation type="journal article" date="1997" name="Nature">
        <title>The nucleotide sequence of Saccharomyces cerevisiae chromosome V.</title>
        <authorList>
            <person name="Dietrich F.S."/>
            <person name="Mulligan J.T."/>
            <person name="Hennessy K.M."/>
            <person name="Yelton M.A."/>
            <person name="Allen E."/>
            <person name="Araujo R."/>
            <person name="Aviles E."/>
            <person name="Berno A."/>
            <person name="Brennan T."/>
            <person name="Carpenter J."/>
            <person name="Chen E."/>
            <person name="Cherry J.M."/>
            <person name="Chung E."/>
            <person name="Duncan M."/>
            <person name="Guzman E."/>
            <person name="Hartzell G."/>
            <person name="Hunicke-Smith S."/>
            <person name="Hyman R.W."/>
            <person name="Kayser A."/>
            <person name="Komp C."/>
            <person name="Lashkari D."/>
            <person name="Lew H."/>
            <person name="Lin D."/>
            <person name="Mosedale D."/>
            <person name="Nakahara K."/>
            <person name="Namath A."/>
            <person name="Norgren R."/>
            <person name="Oefner P."/>
            <person name="Oh C."/>
            <person name="Petel F.X."/>
            <person name="Roberts D."/>
            <person name="Sehl P."/>
            <person name="Schramm S."/>
            <person name="Shogren T."/>
            <person name="Smith V."/>
            <person name="Taylor P."/>
            <person name="Wei Y."/>
            <person name="Botstein D."/>
            <person name="Davis R.W."/>
        </authorList>
    </citation>
    <scope>NUCLEOTIDE SEQUENCE [LARGE SCALE GENOMIC DNA]</scope>
    <source>
        <strain>ATCC 204508 / S288c</strain>
    </source>
</reference>
<reference key="3">
    <citation type="journal article" date="2014" name="G3 (Bethesda)">
        <title>The reference genome sequence of Saccharomyces cerevisiae: Then and now.</title>
        <authorList>
            <person name="Engel S.R."/>
            <person name="Dietrich F.S."/>
            <person name="Fisk D.G."/>
            <person name="Binkley G."/>
            <person name="Balakrishnan R."/>
            <person name="Costanzo M.C."/>
            <person name="Dwight S.S."/>
            <person name="Hitz B.C."/>
            <person name="Karra K."/>
            <person name="Nash R.S."/>
            <person name="Weng S."/>
            <person name="Wong E.D."/>
            <person name="Lloyd P."/>
            <person name="Skrzypek M.S."/>
            <person name="Miyasato S.R."/>
            <person name="Simison M."/>
            <person name="Cherry J.M."/>
        </authorList>
    </citation>
    <scope>GENOME REANNOTATION</scope>
    <source>
        <strain>ATCC 204508 / S288c</strain>
    </source>
</reference>
<reference key="4">
    <citation type="journal article" date="1998" name="Mol. Cell. Biol.">
        <title>Protein serine/threonine phosphatase Ptc2p negatively regulates the unfolded-protein response by dephosphorylating Ire1p kinase.</title>
        <authorList>
            <person name="Welihinda A.A."/>
            <person name="Tirasophon W."/>
            <person name="Green S.R."/>
            <person name="Kaufman R.J."/>
        </authorList>
    </citation>
    <scope>FUNCTION</scope>
    <scope>CATALYTIC ACTIVITY</scope>
    <scope>COFACTOR</scope>
    <scope>INTERACTION WITH IRE1</scope>
    <scope>MUTAGENESIS OF 37-GLU-ASP-38 AND ASP-234</scope>
</reference>
<reference key="5">
    <citation type="journal article" date="1999" name="Genes Dev.">
        <title>Dephosphorylation of cyclin-dependent kinases by type 2C protein phosphatases.</title>
        <authorList>
            <person name="Cheng A."/>
            <person name="Ross K.E."/>
            <person name="Kaldis P."/>
            <person name="Solomon M.J."/>
        </authorList>
    </citation>
    <scope>FUNCTION</scope>
</reference>
<reference key="6">
    <citation type="journal article" date="2002" name="Eukaryot. Cell">
        <title>Role of Ptc2 type 2C Ser/Thr phosphatase in yeast high-osmolarity glycerol pathway inactivation.</title>
        <authorList>
            <person name="Young C."/>
            <person name="Mapes J."/>
            <person name="Hanneman J."/>
            <person name="Al-Zarban S."/>
            <person name="Ota I.M."/>
        </authorList>
    </citation>
    <scope>FUNCTION</scope>
    <scope>CATALYTIC ACTIVITY</scope>
    <scope>SUBCELLULAR LOCATION</scope>
    <scope>DISRUPTION PHENOTYPE</scope>
</reference>
<reference key="7">
    <citation type="journal article" date="2003" name="Mol. Cell">
        <title>PP2C phosphatases Ptc2 and Ptc3 are required for DNA checkpoint inactivation after a double-strand break.</title>
        <authorList>
            <person name="Leroy C."/>
            <person name="Lee S.E."/>
            <person name="Vaze M.B."/>
            <person name="Ochsenbein F."/>
            <person name="Guerois R."/>
            <person name="Haber J.E."/>
            <person name="Marsolier-Kergoat M.C."/>
        </authorList>
    </citation>
    <scope>FUNCTION</scope>
    <scope>INTERACTION WITH RAD53</scope>
    <scope>MUTAGENESIS OF 37-GLU-ASP-38 AND ASP-234</scope>
</reference>
<reference key="8">
    <citation type="journal article" date="2003" name="Mol. Cell">
        <authorList>
            <person name="Leroy C."/>
            <person name="Lee S.E."/>
            <person name="Vaze M.B."/>
            <person name="Ochsenbein F."/>
            <person name="Guerois R."/>
            <person name="Haber J.E."/>
            <person name="Marsolier-Kergoat M.C."/>
        </authorList>
    </citation>
    <scope>ERRATUM OF PUBMED:12667463</scope>
</reference>
<reference key="9">
    <citation type="journal article" date="2003" name="Nature">
        <title>Global analysis of protein expression in yeast.</title>
        <authorList>
            <person name="Ghaemmaghami S."/>
            <person name="Huh W.-K."/>
            <person name="Bower K."/>
            <person name="Howson R.W."/>
            <person name="Belle A."/>
            <person name="Dephoure N."/>
            <person name="O'Shea E.K."/>
            <person name="Weissman J.S."/>
        </authorList>
    </citation>
    <scope>LEVEL OF PROTEIN EXPRESSION [LARGE SCALE ANALYSIS]</scope>
</reference>
<reference key="10">
    <citation type="journal article" date="2009" name="Science">
        <title>Global analysis of Cdk1 substrate phosphorylation sites provides insights into evolution.</title>
        <authorList>
            <person name="Holt L.J."/>
            <person name="Tuch B.B."/>
            <person name="Villen J."/>
            <person name="Johnson A.D."/>
            <person name="Gygi S.P."/>
            <person name="Morgan D.O."/>
        </authorList>
    </citation>
    <scope>PHOSPHORYLATION [LARGE SCALE ANALYSIS] AT THR-376 AND THR-380</scope>
    <scope>IDENTIFICATION BY MASS SPECTROMETRY [LARGE SCALE ANALYSIS]</scope>
</reference>
<reference key="11">
    <citation type="journal article" date="2019" name="Proc. Natl. Acad. Sci. U.S.A.">
        <title>PP2C phosphatases promote autophagy by dephosphorylation of the Atg1 complex.</title>
        <authorList>
            <person name="Memisoglu G."/>
            <person name="Eapen V.V."/>
            <person name="Yang Y."/>
            <person name="Klionsky D.J."/>
            <person name="Haber J.E."/>
        </authorList>
    </citation>
    <scope>FUNCTION</scope>
    <scope>INTERACTION WITH ATG13</scope>
    <scope>DISRUPTION PHENOTYPE</scope>
</reference>
<proteinExistence type="evidence at protein level"/>
<keyword id="KW-0963">Cytoplasm</keyword>
<keyword id="KW-0378">Hydrolase</keyword>
<keyword id="KW-0460">Magnesium</keyword>
<keyword id="KW-0464">Manganese</keyword>
<keyword id="KW-0479">Metal-binding</keyword>
<keyword id="KW-0539">Nucleus</keyword>
<keyword id="KW-0597">Phosphoprotein</keyword>
<keyword id="KW-0904">Protein phosphatase</keyword>
<keyword id="KW-1185">Reference proteome</keyword>
<evidence type="ECO:0000250" key="1">
    <source>
        <dbReference type="UniProtKB" id="P35813"/>
    </source>
</evidence>
<evidence type="ECO:0000255" key="2">
    <source>
        <dbReference type="PROSITE-ProRule" id="PRU01082"/>
    </source>
</evidence>
<evidence type="ECO:0000256" key="3">
    <source>
        <dbReference type="SAM" id="MobiDB-lite"/>
    </source>
</evidence>
<evidence type="ECO:0000269" key="4">
    <source>
    </source>
</evidence>
<evidence type="ECO:0000269" key="5">
    <source>
    </source>
</evidence>
<evidence type="ECO:0000269" key="6">
    <source>
    </source>
</evidence>
<evidence type="ECO:0000269" key="7">
    <source>
    </source>
</evidence>
<evidence type="ECO:0000269" key="8">
    <source>
    </source>
</evidence>
<evidence type="ECO:0000269" key="9">
    <source>
    </source>
</evidence>
<evidence type="ECO:0000305" key="10"/>
<evidence type="ECO:0000305" key="11">
    <source>
    </source>
</evidence>
<evidence type="ECO:0007744" key="12">
    <source>
    </source>
</evidence>
<comment type="function">
    <text evidence="4 5 6 8 9">Dephosphorylating regulator for many key proteins (PubMed:10580002, PubMed:12477803, PubMed:12667463, PubMed:9528768). Dephosphorylates the cell cycle master regulator CDC28/cyclin-dependent kinase 1; its activity appears redundant with phosphatase PTC3 (PubMed:10580002). Dephosphorylates HOG1 at 'Thr-171', to attenuate activation of the stress-activated p38MAPK cascade; its activity appears redundant with phosphatase PTC3 (PubMed:12477803). Positively regulates both nonselective macroautophagy as well as the selective cytoplasm-to-vacuole (cvt) autophagy pathway and the genotoxin-induced targeted autophagy (GTA) pathway, possibly by dephosphorylating ATG13 to enable the interaction between the ATG17-ATG29-ATG31 and ATG1-ATG13 complexes; its activity appears redundant with phosphatase PTC3 (PubMed:30655342). Dephosphorylates RAD53, to regulate DNA damage checkpoint signaling (PubMed:12667463). Dephosphorylates IRE1, to negatively regulate the endoplasmic reticulum unfolded protein response (PubMed:9528768).</text>
</comment>
<comment type="catalytic activity">
    <reaction evidence="11">
        <text>O-phospho-L-seryl-[protein] + H2O = L-seryl-[protein] + phosphate</text>
        <dbReference type="Rhea" id="RHEA:20629"/>
        <dbReference type="Rhea" id="RHEA-COMP:9863"/>
        <dbReference type="Rhea" id="RHEA-COMP:11604"/>
        <dbReference type="ChEBI" id="CHEBI:15377"/>
        <dbReference type="ChEBI" id="CHEBI:29999"/>
        <dbReference type="ChEBI" id="CHEBI:43474"/>
        <dbReference type="ChEBI" id="CHEBI:83421"/>
        <dbReference type="EC" id="3.1.3.16"/>
    </reaction>
    <physiologicalReaction direction="left-to-right" evidence="11">
        <dbReference type="Rhea" id="RHEA:20630"/>
    </physiologicalReaction>
</comment>
<comment type="catalytic activity">
    <reaction evidence="5 11">
        <text>O-phospho-L-threonyl-[protein] + H2O = L-threonyl-[protein] + phosphate</text>
        <dbReference type="Rhea" id="RHEA:47004"/>
        <dbReference type="Rhea" id="RHEA-COMP:11060"/>
        <dbReference type="Rhea" id="RHEA-COMP:11605"/>
        <dbReference type="ChEBI" id="CHEBI:15377"/>
        <dbReference type="ChEBI" id="CHEBI:30013"/>
        <dbReference type="ChEBI" id="CHEBI:43474"/>
        <dbReference type="ChEBI" id="CHEBI:61977"/>
        <dbReference type="EC" id="3.1.3.16"/>
    </reaction>
    <physiologicalReaction direction="left-to-right" evidence="5 11">
        <dbReference type="Rhea" id="RHEA:47005"/>
    </physiologicalReaction>
</comment>
<comment type="cofactor">
    <cofactor evidence="9">
        <name>Mg(2+)</name>
        <dbReference type="ChEBI" id="CHEBI:18420"/>
    </cofactor>
    <cofactor evidence="1">
        <name>Mn(2+)</name>
        <dbReference type="ChEBI" id="CHEBI:29035"/>
    </cofactor>
    <text evidence="2">Binds 2 magnesium or manganese ions per subunit.</text>
</comment>
<comment type="subunit">
    <text evidence="6 8 9">Interacts with IRE1 (when phosphorylated); the interaction is direct and serves to attenuate the endoplasmic reticulum unfolded protein response (PubMed:9528768). Interacts (when phosphorylated) with RAD53 (via domain FHA 1); the interaction is direct and serves to regulate DNA damage checkpoint signaling (PubMed:12667463). Interacts with the ATG17-ATG29-ATG31 and ATG1-ATG13 supercomplex; to regulate induction of autophagy (PubMed:30655342).</text>
</comment>
<comment type="interaction">
    <interactant intactId="EBI-12795">
        <id>P39966</id>
    </interactant>
    <interactant intactId="EBI-33397">
        <id>Q12447</id>
        <label>PAA1</label>
    </interactant>
    <organismsDiffer>false</organismsDiffer>
    <experiments>9</experiments>
</comment>
<comment type="subcellular location">
    <subcellularLocation>
        <location evidence="5">Nucleus</location>
    </subcellularLocation>
    <subcellularLocation>
        <location evidence="5">Cytoplasm</location>
        <location evidence="5">Cytosol</location>
    </subcellularLocation>
</comment>
<comment type="disruption phenotype">
    <text evidence="5 8">Double knockout with PTC3 leads to elevated activation of HOG1 during osmostress (PubMed:12477803). Double knockout with PTC3 impairs activation of macroautophagy, genotoxin-induced targeted autophagy (GTA) and the cytoplasm-to-vacuole autophagy pathway (PubMed:30655342). Double knockout with PTC2 also leads to decreased dephosphorylation of ATG13 following induction of autophagy and reduces the association between ATG13 and ATG17 (PubMed:30655342).</text>
</comment>
<comment type="miscellaneous">
    <text evidence="7">Present with 12600 molecules/cell in log phase SD medium.</text>
</comment>
<comment type="similarity">
    <text evidence="10">Belongs to the PP2C family.</text>
</comment>
<protein>
    <recommendedName>
        <fullName>Protein phosphatase 2C homolog 2</fullName>
        <shortName>PP2C-2</shortName>
        <ecNumber evidence="5 9">3.1.3.16</ecNumber>
    </recommendedName>
</protein>
<dbReference type="EC" id="3.1.3.16" evidence="5 9"/>
<dbReference type="EMBL" id="U18839">
    <property type="protein sequence ID" value="AAB64644.1"/>
    <property type="molecule type" value="Genomic_DNA"/>
</dbReference>
<dbReference type="EMBL" id="U72498">
    <property type="protein sequence ID" value="AAB17392.1"/>
    <property type="molecule type" value="Genomic_DNA"/>
</dbReference>
<dbReference type="EMBL" id="BK006939">
    <property type="protein sequence ID" value="DAA07750.1"/>
    <property type="molecule type" value="Genomic_DNA"/>
</dbReference>
<dbReference type="PIR" id="S50592">
    <property type="entry name" value="S50592"/>
</dbReference>
<dbReference type="RefSeq" id="NP_011013.1">
    <property type="nucleotide sequence ID" value="NM_001178980.1"/>
</dbReference>
<dbReference type="SMR" id="P39966"/>
<dbReference type="BioGRID" id="36834">
    <property type="interactions" value="218"/>
</dbReference>
<dbReference type="DIP" id="DIP-1539N"/>
<dbReference type="FunCoup" id="P39966">
    <property type="interactions" value="1578"/>
</dbReference>
<dbReference type="IntAct" id="P39966">
    <property type="interactions" value="14"/>
</dbReference>
<dbReference type="MINT" id="P39966"/>
<dbReference type="STRING" id="4932.YER089C"/>
<dbReference type="iPTMnet" id="P39966"/>
<dbReference type="PaxDb" id="4932-YER089C"/>
<dbReference type="PeptideAtlas" id="P39966"/>
<dbReference type="EnsemblFungi" id="YER089C_mRNA">
    <property type="protein sequence ID" value="YER089C"/>
    <property type="gene ID" value="YER089C"/>
</dbReference>
<dbReference type="GeneID" id="856823"/>
<dbReference type="KEGG" id="sce:YER089C"/>
<dbReference type="AGR" id="SGD:S000000891"/>
<dbReference type="SGD" id="S000000891">
    <property type="gene designation" value="PTC2"/>
</dbReference>
<dbReference type="VEuPathDB" id="FungiDB:YER089C"/>
<dbReference type="eggNOG" id="KOG0698">
    <property type="taxonomic scope" value="Eukaryota"/>
</dbReference>
<dbReference type="GeneTree" id="ENSGT00940000172210"/>
<dbReference type="HOGENOM" id="CLU_013173_4_2_1"/>
<dbReference type="InParanoid" id="P39966"/>
<dbReference type="OMA" id="GPGIRNQ"/>
<dbReference type="OrthoDB" id="10264738at2759"/>
<dbReference type="BioCyc" id="YEAST:G3O-30258-MONOMER"/>
<dbReference type="BioGRID-ORCS" id="856823">
    <property type="hits" value="0 hits in 10 CRISPR screens"/>
</dbReference>
<dbReference type="PRO" id="PR:P39966"/>
<dbReference type="Proteomes" id="UP000002311">
    <property type="component" value="Chromosome V"/>
</dbReference>
<dbReference type="RNAct" id="P39966">
    <property type="molecule type" value="protein"/>
</dbReference>
<dbReference type="GO" id="GO:0005737">
    <property type="term" value="C:cytoplasm"/>
    <property type="evidence" value="ECO:0000314"/>
    <property type="project" value="SGD"/>
</dbReference>
<dbReference type="GO" id="GO:0005829">
    <property type="term" value="C:cytosol"/>
    <property type="evidence" value="ECO:0007669"/>
    <property type="project" value="UniProtKB-SubCell"/>
</dbReference>
<dbReference type="GO" id="GO:0005634">
    <property type="term" value="C:nucleus"/>
    <property type="evidence" value="ECO:0000314"/>
    <property type="project" value="SGD"/>
</dbReference>
<dbReference type="GO" id="GO:1990439">
    <property type="term" value="F:MAP kinase serine/threonine phosphatase activity"/>
    <property type="evidence" value="ECO:0000314"/>
    <property type="project" value="SGD"/>
</dbReference>
<dbReference type="GO" id="GO:0046872">
    <property type="term" value="F:metal ion binding"/>
    <property type="evidence" value="ECO:0007669"/>
    <property type="project" value="UniProtKB-KW"/>
</dbReference>
<dbReference type="GO" id="GO:0004722">
    <property type="term" value="F:protein serine/threonine phosphatase activity"/>
    <property type="evidence" value="ECO:0000314"/>
    <property type="project" value="SGD"/>
</dbReference>
<dbReference type="GO" id="GO:1900102">
    <property type="term" value="P:negative regulation of endoplasmic reticulum unfolded protein response"/>
    <property type="evidence" value="ECO:0000315"/>
    <property type="project" value="SGD"/>
</dbReference>
<dbReference type="GO" id="GO:1903753">
    <property type="term" value="P:negative regulation of p38MAPK cascade"/>
    <property type="evidence" value="ECO:0000316"/>
    <property type="project" value="UniProtKB"/>
</dbReference>
<dbReference type="GO" id="GO:0010508">
    <property type="term" value="P:positive regulation of autophagy"/>
    <property type="evidence" value="ECO:0000315"/>
    <property type="project" value="UniProtKB"/>
</dbReference>
<dbReference type="GO" id="GO:1904289">
    <property type="term" value="P:regulation of mitotic DNA damage checkpoint"/>
    <property type="evidence" value="ECO:0000315"/>
    <property type="project" value="UniProtKB"/>
</dbReference>
<dbReference type="GO" id="GO:0007165">
    <property type="term" value="P:signal transduction"/>
    <property type="evidence" value="ECO:0000318"/>
    <property type="project" value="GO_Central"/>
</dbReference>
<dbReference type="CDD" id="cd00143">
    <property type="entry name" value="PP2Cc"/>
    <property type="match status" value="1"/>
</dbReference>
<dbReference type="FunFam" id="3.60.40.10:FF:000016">
    <property type="entry name" value="Protein phosphatase 2C"/>
    <property type="match status" value="1"/>
</dbReference>
<dbReference type="Gene3D" id="3.60.40.10">
    <property type="entry name" value="PPM-type phosphatase domain"/>
    <property type="match status" value="1"/>
</dbReference>
<dbReference type="InterPro" id="IPR015655">
    <property type="entry name" value="PP2C"/>
</dbReference>
<dbReference type="InterPro" id="IPR000222">
    <property type="entry name" value="PP2C_BS"/>
</dbReference>
<dbReference type="InterPro" id="IPR036457">
    <property type="entry name" value="PPM-type-like_dom_sf"/>
</dbReference>
<dbReference type="InterPro" id="IPR001932">
    <property type="entry name" value="PPM-type_phosphatase-like_dom"/>
</dbReference>
<dbReference type="PANTHER" id="PTHR13832:SF565">
    <property type="entry name" value="AT28366P-RELATED"/>
    <property type="match status" value="1"/>
</dbReference>
<dbReference type="PANTHER" id="PTHR13832">
    <property type="entry name" value="PROTEIN PHOSPHATASE 2C"/>
    <property type="match status" value="1"/>
</dbReference>
<dbReference type="Pfam" id="PF00481">
    <property type="entry name" value="PP2C"/>
    <property type="match status" value="1"/>
</dbReference>
<dbReference type="SMART" id="SM00332">
    <property type="entry name" value="PP2Cc"/>
    <property type="match status" value="1"/>
</dbReference>
<dbReference type="SUPFAM" id="SSF81606">
    <property type="entry name" value="PP2C-like"/>
    <property type="match status" value="1"/>
</dbReference>
<dbReference type="PROSITE" id="PS01032">
    <property type="entry name" value="PPM_1"/>
    <property type="match status" value="1"/>
</dbReference>
<dbReference type="PROSITE" id="PS51746">
    <property type="entry name" value="PPM_2"/>
    <property type="match status" value="1"/>
</dbReference>